<accession>P34401</accession>
<reference key="1">
    <citation type="journal article" date="1994" name="Nature">
        <title>2.2 Mb of contiguous nucleotide sequence from chromosome III of C. elegans.</title>
        <authorList>
            <person name="Wilson R."/>
            <person name="Ainscough R."/>
            <person name="Anderson K."/>
            <person name="Baynes C."/>
            <person name="Berks M."/>
            <person name="Bonfield J."/>
            <person name="Burton J."/>
            <person name="Connell M."/>
            <person name="Copsey T."/>
            <person name="Cooper J."/>
            <person name="Coulson A."/>
            <person name="Craxton M."/>
            <person name="Dear S."/>
            <person name="Du Z."/>
            <person name="Durbin R."/>
            <person name="Favello A."/>
            <person name="Fraser A."/>
            <person name="Fulton L."/>
            <person name="Gardner A."/>
            <person name="Green P."/>
            <person name="Hawkins T."/>
            <person name="Hillier L."/>
            <person name="Jier M."/>
            <person name="Johnston L."/>
            <person name="Jones M."/>
            <person name="Kershaw J."/>
            <person name="Kirsten J."/>
            <person name="Laisster N."/>
            <person name="Latreille P."/>
            <person name="Lightning J."/>
            <person name="Lloyd C."/>
            <person name="Mortimore B."/>
            <person name="O'Callaghan M."/>
            <person name="Parsons J."/>
            <person name="Percy C."/>
            <person name="Rifken L."/>
            <person name="Roopra A."/>
            <person name="Saunders D."/>
            <person name="Shownkeen R."/>
            <person name="Sims M."/>
            <person name="Smaldon N."/>
            <person name="Smith A."/>
            <person name="Smith M."/>
            <person name="Sonnhammer E."/>
            <person name="Staden R."/>
            <person name="Sulston J."/>
            <person name="Thierry-Mieg J."/>
            <person name="Thomas K."/>
            <person name="Vaudin M."/>
            <person name="Vaughan K."/>
            <person name="Waterston R."/>
            <person name="Watson A."/>
            <person name="Weinstock L."/>
            <person name="Wilkinson-Sproat J."/>
            <person name="Wohldman P."/>
        </authorList>
    </citation>
    <scope>NUCLEOTIDE SEQUENCE [LARGE SCALE GENOMIC DNA]</scope>
    <source>
        <strain>Bristol N2</strain>
    </source>
</reference>
<reference key="2">
    <citation type="journal article" date="1998" name="Science">
        <title>Genome sequence of the nematode C. elegans: a platform for investigating biology.</title>
        <authorList>
            <consortium name="The C. elegans sequencing consortium"/>
        </authorList>
    </citation>
    <scope>NUCLEOTIDE SEQUENCE [LARGE SCALE GENOMIC DNA]</scope>
    <source>
        <strain>Bristol N2</strain>
    </source>
</reference>
<dbReference type="EMBL" id="FO081105">
    <property type="protein sequence ID" value="CCD69135.1"/>
    <property type="molecule type" value="Genomic_DNA"/>
</dbReference>
<dbReference type="PIR" id="S44805">
    <property type="entry name" value="S44805"/>
</dbReference>
<dbReference type="RefSeq" id="NP_001367747.1">
    <property type="nucleotide sequence ID" value="NM_001379828.2"/>
</dbReference>
<dbReference type="RefSeq" id="NP_498823.1">
    <property type="nucleotide sequence ID" value="NM_066422.6"/>
</dbReference>
<dbReference type="SMR" id="P34401"/>
<dbReference type="FunCoup" id="P34401">
    <property type="interactions" value="1453"/>
</dbReference>
<dbReference type="STRING" id="6239.F10E9.7.2"/>
<dbReference type="PaxDb" id="6239-F10E9.7.1"/>
<dbReference type="EnsemblMetazoa" id="F10E9.7.1">
    <property type="protein sequence ID" value="F10E9.7.1"/>
    <property type="gene ID" value="WBGene00017358"/>
</dbReference>
<dbReference type="EnsemblMetazoa" id="F10E9.7.2">
    <property type="protein sequence ID" value="F10E9.7.2"/>
    <property type="gene ID" value="WBGene00017358"/>
</dbReference>
<dbReference type="GeneID" id="176169"/>
<dbReference type="UCSC" id="F10E9.7">
    <property type="organism name" value="c. elegans"/>
</dbReference>
<dbReference type="AGR" id="WB:WBGene00017358"/>
<dbReference type="WormBase" id="F10E9.7">
    <property type="protein sequence ID" value="CE29494"/>
    <property type="gene ID" value="WBGene00017358"/>
</dbReference>
<dbReference type="eggNOG" id="ENOG502TIKS">
    <property type="taxonomic scope" value="Eukaryota"/>
</dbReference>
<dbReference type="HOGENOM" id="CLU_122540_0_0_1"/>
<dbReference type="InParanoid" id="P34401"/>
<dbReference type="OMA" id="ISKIWYW"/>
<dbReference type="OrthoDB" id="5808941at2759"/>
<dbReference type="PhylomeDB" id="P34401"/>
<dbReference type="PRO" id="PR:P34401"/>
<dbReference type="Proteomes" id="UP000001940">
    <property type="component" value="Chromosome III"/>
</dbReference>
<dbReference type="Bgee" id="WBGene00017358">
    <property type="expression patterns" value="Expressed in germ line (C elegans) and 4 other cell types or tissues"/>
</dbReference>
<dbReference type="GO" id="GO:0003824">
    <property type="term" value="F:catalytic activity"/>
    <property type="evidence" value="ECO:0007669"/>
    <property type="project" value="InterPro"/>
</dbReference>
<dbReference type="Gene3D" id="3.40.140.10">
    <property type="entry name" value="Cytidine Deaminase, domain 2"/>
    <property type="match status" value="1"/>
</dbReference>
<dbReference type="InterPro" id="IPR002125">
    <property type="entry name" value="CMP_dCMP_dom"/>
</dbReference>
<dbReference type="InterPro" id="IPR016193">
    <property type="entry name" value="Cytidine_deaminase-like"/>
</dbReference>
<dbReference type="Pfam" id="PF00383">
    <property type="entry name" value="dCMP_cyt_deam_1"/>
    <property type="match status" value="1"/>
</dbReference>
<dbReference type="SUPFAM" id="SSF53927">
    <property type="entry name" value="Cytidine deaminase-like"/>
    <property type="match status" value="1"/>
</dbReference>
<dbReference type="PROSITE" id="PS51747">
    <property type="entry name" value="CYT_DCMP_DEAMINASES_2"/>
    <property type="match status" value="1"/>
</dbReference>
<gene>
    <name type="ORF">F10E9.7</name>
</gene>
<organism>
    <name type="scientific">Caenorhabditis elegans</name>
    <dbReference type="NCBI Taxonomy" id="6239"/>
    <lineage>
        <taxon>Eukaryota</taxon>
        <taxon>Metazoa</taxon>
        <taxon>Ecdysozoa</taxon>
        <taxon>Nematoda</taxon>
        <taxon>Chromadorea</taxon>
        <taxon>Rhabditida</taxon>
        <taxon>Rhabditina</taxon>
        <taxon>Rhabditomorpha</taxon>
        <taxon>Rhabditoidea</taxon>
        <taxon>Rhabditidae</taxon>
        <taxon>Peloderinae</taxon>
        <taxon>Caenorhabditis</taxon>
    </lineage>
</organism>
<evidence type="ECO:0000255" key="1">
    <source>
        <dbReference type="PROSITE-ProRule" id="PRU01083"/>
    </source>
</evidence>
<proteinExistence type="predicted"/>
<sequence length="131" mass="14888">MYMARMLSEMSTVKRPDGCYIVDQEHYQIVSGYAGELLPSNSNVCNCGISVALQKLENKSHNGMDCIIYTSSFPDCSHCLEKILNLKISKIWHWNSPTTTKELKILEMLEASSIQCEKYTPTRTISINFNN</sequence>
<feature type="chain" id="PRO_0000065290" description="Uncharacterized protein F10E9.7">
    <location>
        <begin position="1"/>
        <end position="131"/>
    </location>
</feature>
<feature type="domain" description="CMP/dCMP-type deaminase" evidence="1">
    <location>
        <begin position="1"/>
        <end position="116"/>
    </location>
</feature>
<name>YLU7_CAEEL</name>
<keyword id="KW-1185">Reference proteome</keyword>
<protein>
    <recommendedName>
        <fullName>Uncharacterized protein F10E9.7</fullName>
    </recommendedName>
</protein>